<protein>
    <recommendedName>
        <fullName>Putative serine/threonine-protein kinase YrzF</fullName>
        <ecNumber>2.7.11.1</ecNumber>
    </recommendedName>
</protein>
<feature type="chain" id="PRO_0000387941" description="Putative serine/threonine-protein kinase YrzF">
    <location>
        <begin position="1"/>
        <end position="215"/>
    </location>
</feature>
<feature type="domain" description="Protein kinase">
    <location>
        <begin position="27"/>
        <end position="215"/>
    </location>
</feature>
<feature type="active site" description="Proton acceptor" evidence="1">
    <location>
        <position position="135"/>
    </location>
</feature>
<feature type="binding site" evidence="1">
    <location>
        <begin position="33"/>
        <end position="41"/>
    </location>
    <ligand>
        <name>ATP</name>
        <dbReference type="ChEBI" id="CHEBI:30616"/>
    </ligand>
</feature>
<feature type="binding site" evidence="1">
    <location>
        <position position="54"/>
    </location>
    <ligand>
        <name>ATP</name>
        <dbReference type="ChEBI" id="CHEBI:30616"/>
    </ligand>
</feature>
<dbReference type="EC" id="2.7.11.1"/>
<dbReference type="EMBL" id="Y15896">
    <property type="protein sequence ID" value="CAB75326.1"/>
    <property type="status" value="ALT_FRAME"/>
    <property type="molecule type" value="Genomic_DNA"/>
</dbReference>
<dbReference type="EMBL" id="AL009126">
    <property type="protein sequence ID" value="CAB14738.2"/>
    <property type="molecule type" value="Genomic_DNA"/>
</dbReference>
<dbReference type="PIR" id="E69982">
    <property type="entry name" value="E69982"/>
</dbReference>
<dbReference type="RefSeq" id="NP_390656.2">
    <property type="nucleotide sequence ID" value="NC_000964.3"/>
</dbReference>
<dbReference type="RefSeq" id="WP_003246159.1">
    <property type="nucleotide sequence ID" value="NZ_OZ025638.1"/>
</dbReference>
<dbReference type="SMR" id="O32057"/>
<dbReference type="FunCoup" id="O32057">
    <property type="interactions" value="3"/>
</dbReference>
<dbReference type="STRING" id="224308.BSU27785"/>
<dbReference type="PaxDb" id="224308-BSU27785"/>
<dbReference type="EnsemblBacteria" id="CAB14738">
    <property type="protein sequence ID" value="CAB14738"/>
    <property type="gene ID" value="BSU_27785"/>
</dbReference>
<dbReference type="GeneID" id="936570"/>
<dbReference type="KEGG" id="bsu:BSU27785"/>
<dbReference type="PATRIC" id="fig|224308.179.peg.3018"/>
<dbReference type="eggNOG" id="COG2112">
    <property type="taxonomic scope" value="Bacteria"/>
</dbReference>
<dbReference type="InParanoid" id="O32057"/>
<dbReference type="OrthoDB" id="529320at2"/>
<dbReference type="BioCyc" id="BSUB:BSU27785-MONOMER"/>
<dbReference type="Proteomes" id="UP000001570">
    <property type="component" value="Chromosome"/>
</dbReference>
<dbReference type="GO" id="GO:0005524">
    <property type="term" value="F:ATP binding"/>
    <property type="evidence" value="ECO:0007669"/>
    <property type="project" value="UniProtKB-KW"/>
</dbReference>
<dbReference type="GO" id="GO:0106310">
    <property type="term" value="F:protein serine kinase activity"/>
    <property type="evidence" value="ECO:0007669"/>
    <property type="project" value="RHEA"/>
</dbReference>
<dbReference type="GO" id="GO:0004674">
    <property type="term" value="F:protein serine/threonine kinase activity"/>
    <property type="evidence" value="ECO:0007669"/>
    <property type="project" value="UniProtKB-KW"/>
</dbReference>
<dbReference type="Gene3D" id="1.10.510.10">
    <property type="entry name" value="Transferase(Phosphotransferase) domain 1"/>
    <property type="match status" value="1"/>
</dbReference>
<dbReference type="InterPro" id="IPR002575">
    <property type="entry name" value="Aminoglycoside_PTrfase"/>
</dbReference>
<dbReference type="InterPro" id="IPR011009">
    <property type="entry name" value="Kinase-like_dom_sf"/>
</dbReference>
<dbReference type="InterPro" id="IPR052396">
    <property type="entry name" value="Meiotic_Drive_Suppr_Kinase"/>
</dbReference>
<dbReference type="InterPro" id="IPR017441">
    <property type="entry name" value="Protein_kinase_ATP_BS"/>
</dbReference>
<dbReference type="PANTHER" id="PTHR37171">
    <property type="entry name" value="SERINE/THREONINE-PROTEIN KINASE YRZF-RELATED"/>
    <property type="match status" value="1"/>
</dbReference>
<dbReference type="PANTHER" id="PTHR37171:SF1">
    <property type="entry name" value="SERINE_THREONINE-PROTEIN KINASE YRZF-RELATED"/>
    <property type="match status" value="1"/>
</dbReference>
<dbReference type="Pfam" id="PF01636">
    <property type="entry name" value="APH"/>
    <property type="match status" value="1"/>
</dbReference>
<dbReference type="SUPFAM" id="SSF56112">
    <property type="entry name" value="Protein kinase-like (PK-like)"/>
    <property type="match status" value="1"/>
</dbReference>
<dbReference type="PROSITE" id="PS00107">
    <property type="entry name" value="PROTEIN_KINASE_ATP"/>
    <property type="match status" value="1"/>
</dbReference>
<accession>O32057</accession>
<accession>C0SPA9</accession>
<accession>Q799D9</accession>
<name>YRZF_BACSU</name>
<evidence type="ECO:0000250" key="1"/>
<evidence type="ECO:0000305" key="2"/>
<sequence length="215" mass="24720">MLTKAEALAHTVIYRKNSRFDKVKEKSEELTLIGKGRSAYVFALTEGGRKMALKVFFPEYQATAVKEAAIYEKLAGSAFYPDIYETGDSFILMEYIKGETFYNCLKKGIAISDDMIQQVEEALSDARAAGLNPSDIHLRNLILTETGAVRVIDVARFEQTKTCTQWDDLKSAYHALYKKPIFPKKIPGFWLEIIAFLYKKDWFQKHFAQRKRKYS</sequence>
<comment type="catalytic activity">
    <reaction>
        <text>L-seryl-[protein] + ATP = O-phospho-L-seryl-[protein] + ADP + H(+)</text>
        <dbReference type="Rhea" id="RHEA:17989"/>
        <dbReference type="Rhea" id="RHEA-COMP:9863"/>
        <dbReference type="Rhea" id="RHEA-COMP:11604"/>
        <dbReference type="ChEBI" id="CHEBI:15378"/>
        <dbReference type="ChEBI" id="CHEBI:29999"/>
        <dbReference type="ChEBI" id="CHEBI:30616"/>
        <dbReference type="ChEBI" id="CHEBI:83421"/>
        <dbReference type="ChEBI" id="CHEBI:456216"/>
        <dbReference type="EC" id="2.7.11.1"/>
    </reaction>
</comment>
<comment type="catalytic activity">
    <reaction>
        <text>L-threonyl-[protein] + ATP = O-phospho-L-threonyl-[protein] + ADP + H(+)</text>
        <dbReference type="Rhea" id="RHEA:46608"/>
        <dbReference type="Rhea" id="RHEA-COMP:11060"/>
        <dbReference type="Rhea" id="RHEA-COMP:11605"/>
        <dbReference type="ChEBI" id="CHEBI:15378"/>
        <dbReference type="ChEBI" id="CHEBI:30013"/>
        <dbReference type="ChEBI" id="CHEBI:30616"/>
        <dbReference type="ChEBI" id="CHEBI:61977"/>
        <dbReference type="ChEBI" id="CHEBI:456216"/>
        <dbReference type="EC" id="2.7.11.1"/>
    </reaction>
</comment>
<comment type="similarity">
    <text evidence="2">Belongs to the protein kinase superfamily. Ser/Thr protein kinase family.</text>
</comment>
<comment type="sequence caution" evidence="2">
    <conflict type="frameshift">
        <sequence resource="EMBL-CDS" id="CAB75326"/>
    </conflict>
</comment>
<proteinExistence type="inferred from homology"/>
<reference key="1">
    <citation type="submission" date="1997-12" db="EMBL/GenBank/DDBJ databases">
        <title>A 17.8 kb segment in the spoVB-nadC region of the Bacillus subtilis 168 chromosome: sequencing and ruv operon identification.</title>
        <authorList>
            <person name="Tosato V."/>
            <person name="Bolotin A."/>
            <person name="Bertani I."/>
            <person name="Valentino I."/>
            <person name="Bruschi C.V."/>
        </authorList>
    </citation>
    <scope>NUCLEOTIDE SEQUENCE [GENOMIC DNA]</scope>
    <source>
        <strain>168</strain>
    </source>
</reference>
<reference key="2">
    <citation type="journal article" date="1997" name="Nature">
        <title>The complete genome sequence of the Gram-positive bacterium Bacillus subtilis.</title>
        <authorList>
            <person name="Kunst F."/>
            <person name="Ogasawara N."/>
            <person name="Moszer I."/>
            <person name="Albertini A.M."/>
            <person name="Alloni G."/>
            <person name="Azevedo V."/>
            <person name="Bertero M.G."/>
            <person name="Bessieres P."/>
            <person name="Bolotin A."/>
            <person name="Borchert S."/>
            <person name="Borriss R."/>
            <person name="Boursier L."/>
            <person name="Brans A."/>
            <person name="Braun M."/>
            <person name="Brignell S.C."/>
            <person name="Bron S."/>
            <person name="Brouillet S."/>
            <person name="Bruschi C.V."/>
            <person name="Caldwell B."/>
            <person name="Capuano V."/>
            <person name="Carter N.M."/>
            <person name="Choi S.-K."/>
            <person name="Codani J.-J."/>
            <person name="Connerton I.F."/>
            <person name="Cummings N.J."/>
            <person name="Daniel R.A."/>
            <person name="Denizot F."/>
            <person name="Devine K.M."/>
            <person name="Duesterhoeft A."/>
            <person name="Ehrlich S.D."/>
            <person name="Emmerson P.T."/>
            <person name="Entian K.-D."/>
            <person name="Errington J."/>
            <person name="Fabret C."/>
            <person name="Ferrari E."/>
            <person name="Foulger D."/>
            <person name="Fritz C."/>
            <person name="Fujita M."/>
            <person name="Fujita Y."/>
            <person name="Fuma S."/>
            <person name="Galizzi A."/>
            <person name="Galleron N."/>
            <person name="Ghim S.-Y."/>
            <person name="Glaser P."/>
            <person name="Goffeau A."/>
            <person name="Golightly E.J."/>
            <person name="Grandi G."/>
            <person name="Guiseppi G."/>
            <person name="Guy B.J."/>
            <person name="Haga K."/>
            <person name="Haiech J."/>
            <person name="Harwood C.R."/>
            <person name="Henaut A."/>
            <person name="Hilbert H."/>
            <person name="Holsappel S."/>
            <person name="Hosono S."/>
            <person name="Hullo M.-F."/>
            <person name="Itaya M."/>
            <person name="Jones L.-M."/>
            <person name="Joris B."/>
            <person name="Karamata D."/>
            <person name="Kasahara Y."/>
            <person name="Klaerr-Blanchard M."/>
            <person name="Klein C."/>
            <person name="Kobayashi Y."/>
            <person name="Koetter P."/>
            <person name="Koningstein G."/>
            <person name="Krogh S."/>
            <person name="Kumano M."/>
            <person name="Kurita K."/>
            <person name="Lapidus A."/>
            <person name="Lardinois S."/>
            <person name="Lauber J."/>
            <person name="Lazarevic V."/>
            <person name="Lee S.-M."/>
            <person name="Levine A."/>
            <person name="Liu H."/>
            <person name="Masuda S."/>
            <person name="Mauel C."/>
            <person name="Medigue C."/>
            <person name="Medina N."/>
            <person name="Mellado R.P."/>
            <person name="Mizuno M."/>
            <person name="Moestl D."/>
            <person name="Nakai S."/>
            <person name="Noback M."/>
            <person name="Noone D."/>
            <person name="O'Reilly M."/>
            <person name="Ogawa K."/>
            <person name="Ogiwara A."/>
            <person name="Oudega B."/>
            <person name="Park S.-H."/>
            <person name="Parro V."/>
            <person name="Pohl T.M."/>
            <person name="Portetelle D."/>
            <person name="Porwollik S."/>
            <person name="Prescott A.M."/>
            <person name="Presecan E."/>
            <person name="Pujic P."/>
            <person name="Purnelle B."/>
            <person name="Rapoport G."/>
            <person name="Rey M."/>
            <person name="Reynolds S."/>
            <person name="Rieger M."/>
            <person name="Rivolta C."/>
            <person name="Rocha E."/>
            <person name="Roche B."/>
            <person name="Rose M."/>
            <person name="Sadaie Y."/>
            <person name="Sato T."/>
            <person name="Scanlan E."/>
            <person name="Schleich S."/>
            <person name="Schroeter R."/>
            <person name="Scoffone F."/>
            <person name="Sekiguchi J."/>
            <person name="Sekowska A."/>
            <person name="Seror S.J."/>
            <person name="Serror P."/>
            <person name="Shin B.-S."/>
            <person name="Soldo B."/>
            <person name="Sorokin A."/>
            <person name="Tacconi E."/>
            <person name="Takagi T."/>
            <person name="Takahashi H."/>
            <person name="Takemaru K."/>
            <person name="Takeuchi M."/>
            <person name="Tamakoshi A."/>
            <person name="Tanaka T."/>
            <person name="Terpstra P."/>
            <person name="Tognoni A."/>
            <person name="Tosato V."/>
            <person name="Uchiyama S."/>
            <person name="Vandenbol M."/>
            <person name="Vannier F."/>
            <person name="Vassarotti A."/>
            <person name="Viari A."/>
            <person name="Wambutt R."/>
            <person name="Wedler E."/>
            <person name="Wedler H."/>
            <person name="Weitzenegger T."/>
            <person name="Winters P."/>
            <person name="Wipat A."/>
            <person name="Yamamoto H."/>
            <person name="Yamane K."/>
            <person name="Yasumoto K."/>
            <person name="Yata K."/>
            <person name="Yoshida K."/>
            <person name="Yoshikawa H.-F."/>
            <person name="Zumstein E."/>
            <person name="Yoshikawa H."/>
            <person name="Danchin A."/>
        </authorList>
    </citation>
    <scope>NUCLEOTIDE SEQUENCE [LARGE SCALE GENOMIC DNA]</scope>
    <source>
        <strain>168</strain>
    </source>
</reference>
<reference key="3">
    <citation type="journal article" date="2009" name="Microbiology">
        <title>From a consortium sequence to a unified sequence: the Bacillus subtilis 168 reference genome a decade later.</title>
        <authorList>
            <person name="Barbe V."/>
            <person name="Cruveiller S."/>
            <person name="Kunst F."/>
            <person name="Lenoble P."/>
            <person name="Meurice G."/>
            <person name="Sekowska A."/>
            <person name="Vallenet D."/>
            <person name="Wang T."/>
            <person name="Moszer I."/>
            <person name="Medigue C."/>
            <person name="Danchin A."/>
        </authorList>
    </citation>
    <scope>SEQUENCE REVISION TO C-TERMINUS</scope>
</reference>
<gene>
    <name type="primary">yrzF</name>
    <name type="ordered locus">BSU27785</name>
    <name type="ORF">BSU27780</name>
</gene>
<organism>
    <name type="scientific">Bacillus subtilis (strain 168)</name>
    <dbReference type="NCBI Taxonomy" id="224308"/>
    <lineage>
        <taxon>Bacteria</taxon>
        <taxon>Bacillati</taxon>
        <taxon>Bacillota</taxon>
        <taxon>Bacilli</taxon>
        <taxon>Bacillales</taxon>
        <taxon>Bacillaceae</taxon>
        <taxon>Bacillus</taxon>
    </lineage>
</organism>
<keyword id="KW-0067">ATP-binding</keyword>
<keyword id="KW-0418">Kinase</keyword>
<keyword id="KW-0547">Nucleotide-binding</keyword>
<keyword id="KW-1185">Reference proteome</keyword>
<keyword id="KW-0723">Serine/threonine-protein kinase</keyword>
<keyword id="KW-0808">Transferase</keyword>